<sequence>MKHGIKKNKLSRCTEHRLSMLKNLSISLINHEQIVTTLPKAKALRPYVEKFITIAKNNDSLHGRRLLLSRLHNSKLVVDKLLSVLANRYQDRKGGYSRIIKFGTRKGDCAPMAVIELVDRDISAKGEIYSKNKKGSKVVTQS</sequence>
<name>RL17_WOLPP</name>
<comment type="subunit">
    <text evidence="1">Part of the 50S ribosomal subunit. Contacts protein L32.</text>
</comment>
<comment type="similarity">
    <text evidence="1">Belongs to the bacterial ribosomal protein bL17 family.</text>
</comment>
<evidence type="ECO:0000255" key="1">
    <source>
        <dbReference type="HAMAP-Rule" id="MF_01368"/>
    </source>
</evidence>
<evidence type="ECO:0000305" key="2"/>
<keyword id="KW-0687">Ribonucleoprotein</keyword>
<keyword id="KW-0689">Ribosomal protein</keyword>
<accession>B3CN50</accession>
<protein>
    <recommendedName>
        <fullName evidence="1">Large ribosomal subunit protein bL17</fullName>
    </recommendedName>
    <alternativeName>
        <fullName evidence="2">50S ribosomal protein L17</fullName>
    </alternativeName>
</protein>
<reference key="1">
    <citation type="journal article" date="2008" name="Mol. Biol. Evol.">
        <title>Genome evolution of Wolbachia strain wPip from the Culex pipiens group.</title>
        <authorList>
            <person name="Klasson L."/>
            <person name="Walker T."/>
            <person name="Sebaihia M."/>
            <person name="Sanders M.J."/>
            <person name="Quail M.A."/>
            <person name="Lord A."/>
            <person name="Sanders S."/>
            <person name="Earl J."/>
            <person name="O'Neill S.L."/>
            <person name="Thomson N."/>
            <person name="Sinkins S.P."/>
            <person name="Parkhill J."/>
        </authorList>
    </citation>
    <scope>NUCLEOTIDE SEQUENCE [LARGE SCALE GENOMIC DNA]</scope>
    <source>
        <strain>wPip</strain>
    </source>
</reference>
<organism>
    <name type="scientific">Wolbachia pipientis subsp. Culex pipiens (strain wPip)</name>
    <dbReference type="NCBI Taxonomy" id="570417"/>
    <lineage>
        <taxon>Bacteria</taxon>
        <taxon>Pseudomonadati</taxon>
        <taxon>Pseudomonadota</taxon>
        <taxon>Alphaproteobacteria</taxon>
        <taxon>Rickettsiales</taxon>
        <taxon>Anaplasmataceae</taxon>
        <taxon>Wolbachieae</taxon>
        <taxon>Wolbachia</taxon>
    </lineage>
</organism>
<feature type="chain" id="PRO_1000144505" description="Large ribosomal subunit protein bL17">
    <location>
        <begin position="1"/>
        <end position="142"/>
    </location>
</feature>
<dbReference type="EMBL" id="AM999887">
    <property type="protein sequence ID" value="CAQ55298.1"/>
    <property type="molecule type" value="Genomic_DNA"/>
</dbReference>
<dbReference type="RefSeq" id="WP_010404731.1">
    <property type="nucleotide sequence ID" value="NC_010981.1"/>
</dbReference>
<dbReference type="SMR" id="B3CN50"/>
<dbReference type="KEGG" id="wpi:WP1190"/>
<dbReference type="eggNOG" id="COG0203">
    <property type="taxonomic scope" value="Bacteria"/>
</dbReference>
<dbReference type="HOGENOM" id="CLU_074407_2_0_5"/>
<dbReference type="Proteomes" id="UP000008814">
    <property type="component" value="Chromosome"/>
</dbReference>
<dbReference type="GO" id="GO:0022625">
    <property type="term" value="C:cytosolic large ribosomal subunit"/>
    <property type="evidence" value="ECO:0007669"/>
    <property type="project" value="TreeGrafter"/>
</dbReference>
<dbReference type="GO" id="GO:0003735">
    <property type="term" value="F:structural constituent of ribosome"/>
    <property type="evidence" value="ECO:0007669"/>
    <property type="project" value="InterPro"/>
</dbReference>
<dbReference type="GO" id="GO:0006412">
    <property type="term" value="P:translation"/>
    <property type="evidence" value="ECO:0007669"/>
    <property type="project" value="UniProtKB-UniRule"/>
</dbReference>
<dbReference type="Gene3D" id="3.90.1030.10">
    <property type="entry name" value="Ribosomal protein L17"/>
    <property type="match status" value="1"/>
</dbReference>
<dbReference type="HAMAP" id="MF_01368">
    <property type="entry name" value="Ribosomal_bL17"/>
    <property type="match status" value="1"/>
</dbReference>
<dbReference type="InterPro" id="IPR000456">
    <property type="entry name" value="Ribosomal_bL17"/>
</dbReference>
<dbReference type="InterPro" id="IPR036373">
    <property type="entry name" value="Ribosomal_bL17_sf"/>
</dbReference>
<dbReference type="NCBIfam" id="TIGR00059">
    <property type="entry name" value="L17"/>
    <property type="match status" value="1"/>
</dbReference>
<dbReference type="PANTHER" id="PTHR14413:SF16">
    <property type="entry name" value="LARGE RIBOSOMAL SUBUNIT PROTEIN BL17M"/>
    <property type="match status" value="1"/>
</dbReference>
<dbReference type="PANTHER" id="PTHR14413">
    <property type="entry name" value="RIBOSOMAL PROTEIN L17"/>
    <property type="match status" value="1"/>
</dbReference>
<dbReference type="Pfam" id="PF01196">
    <property type="entry name" value="Ribosomal_L17"/>
    <property type="match status" value="1"/>
</dbReference>
<dbReference type="SUPFAM" id="SSF64263">
    <property type="entry name" value="Prokaryotic ribosomal protein L17"/>
    <property type="match status" value="1"/>
</dbReference>
<proteinExistence type="inferred from homology"/>
<gene>
    <name evidence="1" type="primary">rplQ</name>
    <name type="ordered locus">WP1190</name>
</gene>